<organism>
    <name type="scientific">Leptospira borgpetersenii serovar Hardjo-bovis (strain L550)</name>
    <dbReference type="NCBI Taxonomy" id="355276"/>
    <lineage>
        <taxon>Bacteria</taxon>
        <taxon>Pseudomonadati</taxon>
        <taxon>Spirochaetota</taxon>
        <taxon>Spirochaetia</taxon>
        <taxon>Leptospirales</taxon>
        <taxon>Leptospiraceae</taxon>
        <taxon>Leptospira</taxon>
    </lineage>
</organism>
<dbReference type="EC" id="3.1.1.29" evidence="1"/>
<dbReference type="EMBL" id="CP000348">
    <property type="protein sequence ID" value="ABJ78969.1"/>
    <property type="molecule type" value="Genomic_DNA"/>
</dbReference>
<dbReference type="RefSeq" id="WP_011670160.1">
    <property type="nucleotide sequence ID" value="NC_008508.1"/>
</dbReference>
<dbReference type="SMR" id="Q051M6"/>
<dbReference type="KEGG" id="lbl:LBL_1506"/>
<dbReference type="PATRIC" id="fig|355276.3.peg.1913"/>
<dbReference type="HOGENOM" id="CLU_062456_3_1_12"/>
<dbReference type="GO" id="GO:0005737">
    <property type="term" value="C:cytoplasm"/>
    <property type="evidence" value="ECO:0007669"/>
    <property type="project" value="UniProtKB-SubCell"/>
</dbReference>
<dbReference type="GO" id="GO:0004045">
    <property type="term" value="F:peptidyl-tRNA hydrolase activity"/>
    <property type="evidence" value="ECO:0007669"/>
    <property type="project" value="UniProtKB-UniRule"/>
</dbReference>
<dbReference type="GO" id="GO:0000049">
    <property type="term" value="F:tRNA binding"/>
    <property type="evidence" value="ECO:0007669"/>
    <property type="project" value="UniProtKB-UniRule"/>
</dbReference>
<dbReference type="GO" id="GO:0006515">
    <property type="term" value="P:protein quality control for misfolded or incompletely synthesized proteins"/>
    <property type="evidence" value="ECO:0007669"/>
    <property type="project" value="UniProtKB-UniRule"/>
</dbReference>
<dbReference type="GO" id="GO:0072344">
    <property type="term" value="P:rescue of stalled ribosome"/>
    <property type="evidence" value="ECO:0007669"/>
    <property type="project" value="UniProtKB-UniRule"/>
</dbReference>
<dbReference type="CDD" id="cd00462">
    <property type="entry name" value="PTH"/>
    <property type="match status" value="1"/>
</dbReference>
<dbReference type="FunFam" id="3.40.50.1470:FF:000001">
    <property type="entry name" value="Peptidyl-tRNA hydrolase"/>
    <property type="match status" value="1"/>
</dbReference>
<dbReference type="Gene3D" id="3.40.50.1470">
    <property type="entry name" value="Peptidyl-tRNA hydrolase"/>
    <property type="match status" value="1"/>
</dbReference>
<dbReference type="HAMAP" id="MF_00083">
    <property type="entry name" value="Pept_tRNA_hydro_bact"/>
    <property type="match status" value="1"/>
</dbReference>
<dbReference type="InterPro" id="IPR001328">
    <property type="entry name" value="Pept_tRNA_hydro"/>
</dbReference>
<dbReference type="InterPro" id="IPR018171">
    <property type="entry name" value="Pept_tRNA_hydro_CS"/>
</dbReference>
<dbReference type="InterPro" id="IPR036416">
    <property type="entry name" value="Pept_tRNA_hydro_sf"/>
</dbReference>
<dbReference type="NCBIfam" id="TIGR00447">
    <property type="entry name" value="pth"/>
    <property type="match status" value="1"/>
</dbReference>
<dbReference type="PANTHER" id="PTHR17224">
    <property type="entry name" value="PEPTIDYL-TRNA HYDROLASE"/>
    <property type="match status" value="1"/>
</dbReference>
<dbReference type="PANTHER" id="PTHR17224:SF1">
    <property type="entry name" value="PEPTIDYL-TRNA HYDROLASE"/>
    <property type="match status" value="1"/>
</dbReference>
<dbReference type="Pfam" id="PF01195">
    <property type="entry name" value="Pept_tRNA_hydro"/>
    <property type="match status" value="1"/>
</dbReference>
<dbReference type="SUPFAM" id="SSF53178">
    <property type="entry name" value="Peptidyl-tRNA hydrolase-like"/>
    <property type="match status" value="1"/>
</dbReference>
<dbReference type="PROSITE" id="PS01195">
    <property type="entry name" value="PEPT_TRNA_HYDROL_1"/>
    <property type="match status" value="1"/>
</dbReference>
<dbReference type="PROSITE" id="PS01196">
    <property type="entry name" value="PEPT_TRNA_HYDROL_2"/>
    <property type="match status" value="1"/>
</dbReference>
<gene>
    <name evidence="1" type="primary">pth</name>
    <name type="ordered locus">LBL_1506</name>
</gene>
<accession>Q051M6</accession>
<protein>
    <recommendedName>
        <fullName evidence="1">Peptidyl-tRNA hydrolase</fullName>
        <shortName evidence="1">Pth</shortName>
        <ecNumber evidence="1">3.1.1.29</ecNumber>
    </recommendedName>
</protein>
<name>PTH_LEPBL</name>
<keyword id="KW-0963">Cytoplasm</keyword>
<keyword id="KW-0378">Hydrolase</keyword>
<keyword id="KW-0694">RNA-binding</keyword>
<keyword id="KW-0820">tRNA-binding</keyword>
<evidence type="ECO:0000255" key="1">
    <source>
        <dbReference type="HAMAP-Rule" id="MF_00083"/>
    </source>
</evidence>
<sequence>MANLKLLLVGIGNPGPKYAYNRHNIGFVILDSLLNSSSASYQTNSKYSLARTDEEGVTIFYLKPLEFMNLSGKAVAEIAKKNGISPENILVIHDEIDFEFGKLKLKEGGGHAGHNGLRNIVEKLGTNTFFRLRFGVGKPSTASEVSDYVLSNFFPEEKEKIPELVQVSLQKIYDWVRERKNEFQKPSDI</sequence>
<proteinExistence type="inferred from homology"/>
<reference key="1">
    <citation type="journal article" date="2006" name="Proc. Natl. Acad. Sci. U.S.A.">
        <title>Genome reduction in Leptospira borgpetersenii reflects limited transmission potential.</title>
        <authorList>
            <person name="Bulach D.M."/>
            <person name="Zuerner R.L."/>
            <person name="Wilson P."/>
            <person name="Seemann T."/>
            <person name="McGrath A."/>
            <person name="Cullen P.A."/>
            <person name="Davis J."/>
            <person name="Johnson M."/>
            <person name="Kuczek E."/>
            <person name="Alt D.P."/>
            <person name="Peterson-Burch B."/>
            <person name="Coppel R.L."/>
            <person name="Rood J.I."/>
            <person name="Davies J.K."/>
            <person name="Adler B."/>
        </authorList>
    </citation>
    <scope>NUCLEOTIDE SEQUENCE [LARGE SCALE GENOMIC DNA]</scope>
    <source>
        <strain>L550</strain>
    </source>
</reference>
<comment type="function">
    <text evidence="1">Hydrolyzes ribosome-free peptidyl-tRNAs (with 1 or more amino acids incorporated), which drop off the ribosome during protein synthesis, or as a result of ribosome stalling.</text>
</comment>
<comment type="function">
    <text evidence="1">Catalyzes the release of premature peptidyl moieties from peptidyl-tRNA molecules trapped in stalled 50S ribosomal subunits, and thus maintains levels of free tRNAs and 50S ribosomes.</text>
</comment>
<comment type="catalytic activity">
    <reaction evidence="1">
        <text>an N-acyl-L-alpha-aminoacyl-tRNA + H2O = an N-acyl-L-amino acid + a tRNA + H(+)</text>
        <dbReference type="Rhea" id="RHEA:54448"/>
        <dbReference type="Rhea" id="RHEA-COMP:10123"/>
        <dbReference type="Rhea" id="RHEA-COMP:13883"/>
        <dbReference type="ChEBI" id="CHEBI:15377"/>
        <dbReference type="ChEBI" id="CHEBI:15378"/>
        <dbReference type="ChEBI" id="CHEBI:59874"/>
        <dbReference type="ChEBI" id="CHEBI:78442"/>
        <dbReference type="ChEBI" id="CHEBI:138191"/>
        <dbReference type="EC" id="3.1.1.29"/>
    </reaction>
</comment>
<comment type="subunit">
    <text evidence="1">Monomer.</text>
</comment>
<comment type="subcellular location">
    <subcellularLocation>
        <location evidence="1">Cytoplasm</location>
    </subcellularLocation>
</comment>
<comment type="similarity">
    <text evidence="1">Belongs to the PTH family.</text>
</comment>
<feature type="chain" id="PRO_1000010606" description="Peptidyl-tRNA hydrolase">
    <location>
        <begin position="1"/>
        <end position="189"/>
    </location>
</feature>
<feature type="active site" description="Proton acceptor" evidence="1">
    <location>
        <position position="23"/>
    </location>
</feature>
<feature type="binding site" evidence="1">
    <location>
        <position position="18"/>
    </location>
    <ligand>
        <name>tRNA</name>
        <dbReference type="ChEBI" id="CHEBI:17843"/>
    </ligand>
</feature>
<feature type="binding site" evidence="1">
    <location>
        <position position="67"/>
    </location>
    <ligand>
        <name>tRNA</name>
        <dbReference type="ChEBI" id="CHEBI:17843"/>
    </ligand>
</feature>
<feature type="binding site" evidence="1">
    <location>
        <position position="69"/>
    </location>
    <ligand>
        <name>tRNA</name>
        <dbReference type="ChEBI" id="CHEBI:17843"/>
    </ligand>
</feature>
<feature type="binding site" evidence="1">
    <location>
        <position position="115"/>
    </location>
    <ligand>
        <name>tRNA</name>
        <dbReference type="ChEBI" id="CHEBI:17843"/>
    </ligand>
</feature>
<feature type="site" description="Discriminates between blocked and unblocked aminoacyl-tRNA" evidence="1">
    <location>
        <position position="13"/>
    </location>
</feature>
<feature type="site" description="Stabilizes the basic form of H active site to accept a proton" evidence="1">
    <location>
        <position position="94"/>
    </location>
</feature>